<reference key="1">
    <citation type="journal article" date="2000" name="Science">
        <title>The genome sequence of Drosophila melanogaster.</title>
        <authorList>
            <person name="Adams M.D."/>
            <person name="Celniker S.E."/>
            <person name="Holt R.A."/>
            <person name="Evans C.A."/>
            <person name="Gocayne J.D."/>
            <person name="Amanatides P.G."/>
            <person name="Scherer S.E."/>
            <person name="Li P.W."/>
            <person name="Hoskins R.A."/>
            <person name="Galle R.F."/>
            <person name="George R.A."/>
            <person name="Lewis S.E."/>
            <person name="Richards S."/>
            <person name="Ashburner M."/>
            <person name="Henderson S.N."/>
            <person name="Sutton G.G."/>
            <person name="Wortman J.R."/>
            <person name="Yandell M.D."/>
            <person name="Zhang Q."/>
            <person name="Chen L.X."/>
            <person name="Brandon R.C."/>
            <person name="Rogers Y.-H.C."/>
            <person name="Blazej R.G."/>
            <person name="Champe M."/>
            <person name="Pfeiffer B.D."/>
            <person name="Wan K.H."/>
            <person name="Doyle C."/>
            <person name="Baxter E.G."/>
            <person name="Helt G."/>
            <person name="Nelson C.R."/>
            <person name="Miklos G.L.G."/>
            <person name="Abril J.F."/>
            <person name="Agbayani A."/>
            <person name="An H.-J."/>
            <person name="Andrews-Pfannkoch C."/>
            <person name="Baldwin D."/>
            <person name="Ballew R.M."/>
            <person name="Basu A."/>
            <person name="Baxendale J."/>
            <person name="Bayraktaroglu L."/>
            <person name="Beasley E.M."/>
            <person name="Beeson K.Y."/>
            <person name="Benos P.V."/>
            <person name="Berman B.P."/>
            <person name="Bhandari D."/>
            <person name="Bolshakov S."/>
            <person name="Borkova D."/>
            <person name="Botchan M.R."/>
            <person name="Bouck J."/>
            <person name="Brokstein P."/>
            <person name="Brottier P."/>
            <person name="Burtis K.C."/>
            <person name="Busam D.A."/>
            <person name="Butler H."/>
            <person name="Cadieu E."/>
            <person name="Center A."/>
            <person name="Chandra I."/>
            <person name="Cherry J.M."/>
            <person name="Cawley S."/>
            <person name="Dahlke C."/>
            <person name="Davenport L.B."/>
            <person name="Davies P."/>
            <person name="de Pablos B."/>
            <person name="Delcher A."/>
            <person name="Deng Z."/>
            <person name="Mays A.D."/>
            <person name="Dew I."/>
            <person name="Dietz S.M."/>
            <person name="Dodson K."/>
            <person name="Doup L.E."/>
            <person name="Downes M."/>
            <person name="Dugan-Rocha S."/>
            <person name="Dunkov B.C."/>
            <person name="Dunn P."/>
            <person name="Durbin K.J."/>
            <person name="Evangelista C.C."/>
            <person name="Ferraz C."/>
            <person name="Ferriera S."/>
            <person name="Fleischmann W."/>
            <person name="Fosler C."/>
            <person name="Gabrielian A.E."/>
            <person name="Garg N.S."/>
            <person name="Gelbart W.M."/>
            <person name="Glasser K."/>
            <person name="Glodek A."/>
            <person name="Gong F."/>
            <person name="Gorrell J.H."/>
            <person name="Gu Z."/>
            <person name="Guan P."/>
            <person name="Harris M."/>
            <person name="Harris N.L."/>
            <person name="Harvey D.A."/>
            <person name="Heiman T.J."/>
            <person name="Hernandez J.R."/>
            <person name="Houck J."/>
            <person name="Hostin D."/>
            <person name="Houston K.A."/>
            <person name="Howland T.J."/>
            <person name="Wei M.-H."/>
            <person name="Ibegwam C."/>
            <person name="Jalali M."/>
            <person name="Kalush F."/>
            <person name="Karpen G.H."/>
            <person name="Ke Z."/>
            <person name="Kennison J.A."/>
            <person name="Ketchum K.A."/>
            <person name="Kimmel B.E."/>
            <person name="Kodira C.D."/>
            <person name="Kraft C.L."/>
            <person name="Kravitz S."/>
            <person name="Kulp D."/>
            <person name="Lai Z."/>
            <person name="Lasko P."/>
            <person name="Lei Y."/>
            <person name="Levitsky A.A."/>
            <person name="Li J.H."/>
            <person name="Li Z."/>
            <person name="Liang Y."/>
            <person name="Lin X."/>
            <person name="Liu X."/>
            <person name="Mattei B."/>
            <person name="McIntosh T.C."/>
            <person name="McLeod M.P."/>
            <person name="McPherson D."/>
            <person name="Merkulov G."/>
            <person name="Milshina N.V."/>
            <person name="Mobarry C."/>
            <person name="Morris J."/>
            <person name="Moshrefi A."/>
            <person name="Mount S.M."/>
            <person name="Moy M."/>
            <person name="Murphy B."/>
            <person name="Murphy L."/>
            <person name="Muzny D.M."/>
            <person name="Nelson D.L."/>
            <person name="Nelson D.R."/>
            <person name="Nelson K.A."/>
            <person name="Nixon K."/>
            <person name="Nusskern D.R."/>
            <person name="Pacleb J.M."/>
            <person name="Palazzolo M."/>
            <person name="Pittman G.S."/>
            <person name="Pan S."/>
            <person name="Pollard J."/>
            <person name="Puri V."/>
            <person name="Reese M.G."/>
            <person name="Reinert K."/>
            <person name="Remington K."/>
            <person name="Saunders R.D.C."/>
            <person name="Scheeler F."/>
            <person name="Shen H."/>
            <person name="Shue B.C."/>
            <person name="Siden-Kiamos I."/>
            <person name="Simpson M."/>
            <person name="Skupski M.P."/>
            <person name="Smith T.J."/>
            <person name="Spier E."/>
            <person name="Spradling A.C."/>
            <person name="Stapleton M."/>
            <person name="Strong R."/>
            <person name="Sun E."/>
            <person name="Svirskas R."/>
            <person name="Tector C."/>
            <person name="Turner R."/>
            <person name="Venter E."/>
            <person name="Wang A.H."/>
            <person name="Wang X."/>
            <person name="Wang Z.-Y."/>
            <person name="Wassarman D.A."/>
            <person name="Weinstock G.M."/>
            <person name="Weissenbach J."/>
            <person name="Williams S.M."/>
            <person name="Woodage T."/>
            <person name="Worley K.C."/>
            <person name="Wu D."/>
            <person name="Yang S."/>
            <person name="Yao Q.A."/>
            <person name="Ye J."/>
            <person name="Yeh R.-F."/>
            <person name="Zaveri J.S."/>
            <person name="Zhan M."/>
            <person name="Zhang G."/>
            <person name="Zhao Q."/>
            <person name="Zheng L."/>
            <person name="Zheng X.H."/>
            <person name="Zhong F.N."/>
            <person name="Zhong W."/>
            <person name="Zhou X."/>
            <person name="Zhu S.C."/>
            <person name="Zhu X."/>
            <person name="Smith H.O."/>
            <person name="Gibbs R.A."/>
            <person name="Myers E.W."/>
            <person name="Rubin G.M."/>
            <person name="Venter J.C."/>
        </authorList>
    </citation>
    <scope>NUCLEOTIDE SEQUENCE [LARGE SCALE GENOMIC DNA]</scope>
    <source>
        <strain>Berkeley</strain>
    </source>
</reference>
<reference key="2">
    <citation type="journal article" date="2002" name="Genome Biol.">
        <title>Annotation of the Drosophila melanogaster euchromatic genome: a systematic review.</title>
        <authorList>
            <person name="Misra S."/>
            <person name="Crosby M.A."/>
            <person name="Mungall C.J."/>
            <person name="Matthews B.B."/>
            <person name="Campbell K.S."/>
            <person name="Hradecky P."/>
            <person name="Huang Y."/>
            <person name="Kaminker J.S."/>
            <person name="Millburn G.H."/>
            <person name="Prochnik S.E."/>
            <person name="Smith C.D."/>
            <person name="Tupy J.L."/>
            <person name="Whitfield E.J."/>
            <person name="Bayraktaroglu L."/>
            <person name="Berman B.P."/>
            <person name="Bettencourt B.R."/>
            <person name="Celniker S.E."/>
            <person name="de Grey A.D.N.J."/>
            <person name="Drysdale R.A."/>
            <person name="Harris N.L."/>
            <person name="Richter J."/>
            <person name="Russo S."/>
            <person name="Schroeder A.J."/>
            <person name="Shu S.Q."/>
            <person name="Stapleton M."/>
            <person name="Yamada C."/>
            <person name="Ashburner M."/>
            <person name="Gelbart W.M."/>
            <person name="Rubin G.M."/>
            <person name="Lewis S.E."/>
        </authorList>
    </citation>
    <scope>GENOME REANNOTATION</scope>
    <source>
        <strain>Berkeley</strain>
    </source>
</reference>
<reference key="3">
    <citation type="journal article" date="2002" name="Genome Biol.">
        <title>A Drosophila full-length cDNA resource.</title>
        <authorList>
            <person name="Stapleton M."/>
            <person name="Carlson J.W."/>
            <person name="Brokstein P."/>
            <person name="Yu C."/>
            <person name="Champe M."/>
            <person name="George R.A."/>
            <person name="Guarin H."/>
            <person name="Kronmiller B."/>
            <person name="Pacleb J.M."/>
            <person name="Park S."/>
            <person name="Wan K.H."/>
            <person name="Rubin G.M."/>
            <person name="Celniker S.E."/>
        </authorList>
    </citation>
    <scope>NUCLEOTIDE SEQUENCE [LARGE SCALE MRNA]</scope>
    <source>
        <strain>Berkeley</strain>
        <tissue>Head</tissue>
    </source>
</reference>
<comment type="function">
    <text evidence="1">May be involved in the metabolism of insect hormones and in the breakdown of synthetic insecticides.</text>
</comment>
<comment type="cofactor">
    <cofactor evidence="1">
        <name>heme</name>
        <dbReference type="ChEBI" id="CHEBI:30413"/>
    </cofactor>
</comment>
<comment type="subcellular location">
    <subcellularLocation>
        <location evidence="2">Endoplasmic reticulum membrane</location>
        <topology evidence="2">Peripheral membrane protein</topology>
    </subcellularLocation>
    <subcellularLocation>
        <location evidence="2">Microsome membrane</location>
        <topology evidence="2">Peripheral membrane protein</topology>
    </subcellularLocation>
</comment>
<comment type="similarity">
    <text evidence="2">Belongs to the cytochrome P450 family.</text>
</comment>
<comment type="sequence caution" evidence="2">
    <conflict type="erroneous gene model prediction">
        <sequence resource="EMBL-CDS" id="AAF58963"/>
    </conflict>
</comment>
<keyword id="KW-0256">Endoplasmic reticulum</keyword>
<keyword id="KW-0349">Heme</keyword>
<keyword id="KW-0408">Iron</keyword>
<keyword id="KW-0472">Membrane</keyword>
<keyword id="KW-0479">Metal-binding</keyword>
<keyword id="KW-0492">Microsome</keyword>
<keyword id="KW-0503">Monooxygenase</keyword>
<keyword id="KW-0560">Oxidoreductase</keyword>
<keyword id="KW-1185">Reference proteome</keyword>
<accession>Q9V557</accession>
<proteinExistence type="evidence at transcript level"/>
<evidence type="ECO:0000250" key="1"/>
<evidence type="ECO:0000305" key="2"/>
<name>CP4P2_DROME</name>
<protein>
    <recommendedName>
        <fullName>Probable cytochrome P450 4p2</fullName>
        <ecNumber>1.14.-.-</ecNumber>
    </recommendedName>
    <alternativeName>
        <fullName>CYPIVP2</fullName>
    </alternativeName>
</protein>
<sequence length="520" mass="60459">MMICLLWISVAILVVIHWIYKVNKDYNILAFFARRVQTKDGKPLDSLVPMIKGRTVFANCFDLLGKDTDQVFTHLRQLAKNSGDSYLQYSMGFSNFNVIDAHNAANILNHPNLITKGVIYNFLHPFLRTGVLTATEKKWHTRRSMLTRTFHLDILNQFQEIFIAESLKFVSQFQGQNEVVVSLKDRISRFTLNSICETAMGIKLDEMAEKGDRYRANFHIIDEGLTRRIVNPLYWDDCVYNMFTGHKYNAALKVVHEFSREIIAKRRVLLEEELENRRATQTADDDICVIRKKRFAMLDTLICAEKDGLIDDIGISEEVDTLMAEGYDTTSIGLVFGLMNMSLYAAEQELCYQEIQEHILDDLSNLNLSQLSKLNYLGYFIKETMRLYPSIPIMGRQTLQETELENGLILPKRSQINIHVFDIHRNPKYWESPEEFRPERFLPQNCLKRHPYAYIPFSAGQRNCIGQKYAMQEMKTLMVVILKHFKILPVIDPKSIVFQVGITLRFKNKIKVKLVRRNCV</sequence>
<feature type="chain" id="PRO_0000051846" description="Probable cytochrome P450 4p2">
    <location>
        <begin position="1"/>
        <end position="520"/>
    </location>
</feature>
<feature type="binding site" description="covalent" evidence="1">
    <location>
        <position position="325"/>
    </location>
    <ligand>
        <name>heme</name>
        <dbReference type="ChEBI" id="CHEBI:30413"/>
    </ligand>
</feature>
<feature type="binding site" description="axial binding residue" evidence="1">
    <location>
        <position position="464"/>
    </location>
    <ligand>
        <name>heme</name>
        <dbReference type="ChEBI" id="CHEBI:30413"/>
    </ligand>
    <ligandPart>
        <name>Fe</name>
        <dbReference type="ChEBI" id="CHEBI:18248"/>
    </ligandPart>
</feature>
<dbReference type="EC" id="1.14.-.-"/>
<dbReference type="EMBL" id="AE013599">
    <property type="protein sequence ID" value="AAF58963.1"/>
    <property type="status" value="ALT_SEQ"/>
    <property type="molecule type" value="Genomic_DNA"/>
</dbReference>
<dbReference type="EMBL" id="AY051564">
    <property type="protein sequence ID" value="AAK92988.1"/>
    <property type="molecule type" value="mRNA"/>
</dbReference>
<dbReference type="RefSeq" id="NP_610472.1">
    <property type="nucleotide sequence ID" value="NM_136628.3"/>
</dbReference>
<dbReference type="SMR" id="Q9V557"/>
<dbReference type="BioGRID" id="61784">
    <property type="interactions" value="1"/>
</dbReference>
<dbReference type="DIP" id="DIP-22977N"/>
<dbReference type="FunCoup" id="Q9V557">
    <property type="interactions" value="6"/>
</dbReference>
<dbReference type="IntAct" id="Q9V557">
    <property type="interactions" value="1"/>
</dbReference>
<dbReference type="STRING" id="7227.FBpp0087672"/>
<dbReference type="PaxDb" id="7227-FBpp0087672"/>
<dbReference type="DNASU" id="35946"/>
<dbReference type="EnsemblMetazoa" id="FBtr0088591">
    <property type="protein sequence ID" value="FBpp0087672"/>
    <property type="gene ID" value="FBgn0033395"/>
</dbReference>
<dbReference type="GeneID" id="35946"/>
<dbReference type="KEGG" id="dme:Dmel_CG1944"/>
<dbReference type="UCSC" id="CG1944-RA">
    <property type="organism name" value="d. melanogaster"/>
</dbReference>
<dbReference type="AGR" id="FB:FBgn0033395"/>
<dbReference type="CTD" id="35946"/>
<dbReference type="FlyBase" id="FBgn0033395">
    <property type="gene designation" value="Cyp4p2"/>
</dbReference>
<dbReference type="VEuPathDB" id="VectorBase:FBgn0033395"/>
<dbReference type="eggNOG" id="KOG0157">
    <property type="taxonomic scope" value="Eukaryota"/>
</dbReference>
<dbReference type="GeneTree" id="ENSGT00940000167779"/>
<dbReference type="HOGENOM" id="CLU_001570_5_1_1"/>
<dbReference type="InParanoid" id="Q9V557"/>
<dbReference type="OMA" id="KLVRRNC"/>
<dbReference type="OrthoDB" id="1470350at2759"/>
<dbReference type="PhylomeDB" id="Q9V557"/>
<dbReference type="Reactome" id="R-DME-193144">
    <property type="pathway name" value="Estrogen biosynthesis"/>
</dbReference>
<dbReference type="Reactome" id="R-DME-211976">
    <property type="pathway name" value="Endogenous sterols"/>
</dbReference>
<dbReference type="SignaLink" id="Q9V557"/>
<dbReference type="BioGRID-ORCS" id="35946">
    <property type="hits" value="0 hits in 3 CRISPR screens"/>
</dbReference>
<dbReference type="GenomeRNAi" id="35946"/>
<dbReference type="PRO" id="PR:Q9V557"/>
<dbReference type="Proteomes" id="UP000000803">
    <property type="component" value="Chromosome 2R"/>
</dbReference>
<dbReference type="Bgee" id="FBgn0033395">
    <property type="expression patterns" value="Expressed in adult tracheocyte (Drosophila) in open tracheal system trachea and 22 other cell types or tissues"/>
</dbReference>
<dbReference type="GO" id="GO:0005789">
    <property type="term" value="C:endoplasmic reticulum membrane"/>
    <property type="evidence" value="ECO:0007669"/>
    <property type="project" value="UniProtKB-SubCell"/>
</dbReference>
<dbReference type="GO" id="GO:0020037">
    <property type="term" value="F:heme binding"/>
    <property type="evidence" value="ECO:0007669"/>
    <property type="project" value="InterPro"/>
</dbReference>
<dbReference type="GO" id="GO:0005506">
    <property type="term" value="F:iron ion binding"/>
    <property type="evidence" value="ECO:0007669"/>
    <property type="project" value="InterPro"/>
</dbReference>
<dbReference type="GO" id="GO:0004497">
    <property type="term" value="F:monooxygenase activity"/>
    <property type="evidence" value="ECO:0007669"/>
    <property type="project" value="UniProtKB-KW"/>
</dbReference>
<dbReference type="GO" id="GO:0016705">
    <property type="term" value="F:oxidoreductase activity, acting on paired donors, with incorporation or reduction of molecular oxygen"/>
    <property type="evidence" value="ECO:0007669"/>
    <property type="project" value="InterPro"/>
</dbReference>
<dbReference type="CDD" id="cd20628">
    <property type="entry name" value="CYP4"/>
    <property type="match status" value="1"/>
</dbReference>
<dbReference type="Gene3D" id="1.10.630.10">
    <property type="entry name" value="Cytochrome P450"/>
    <property type="match status" value="1"/>
</dbReference>
<dbReference type="InterPro" id="IPR001128">
    <property type="entry name" value="Cyt_P450"/>
</dbReference>
<dbReference type="InterPro" id="IPR017972">
    <property type="entry name" value="Cyt_P450_CS"/>
</dbReference>
<dbReference type="InterPro" id="IPR002401">
    <property type="entry name" value="Cyt_P450_E_grp-I"/>
</dbReference>
<dbReference type="InterPro" id="IPR036396">
    <property type="entry name" value="Cyt_P450_sf"/>
</dbReference>
<dbReference type="InterPro" id="IPR050196">
    <property type="entry name" value="Cytochrome_P450_Monoox"/>
</dbReference>
<dbReference type="PANTHER" id="PTHR24291:SF105">
    <property type="entry name" value="CYTOCHROME P450 4P1-RELATED"/>
    <property type="match status" value="1"/>
</dbReference>
<dbReference type="PANTHER" id="PTHR24291">
    <property type="entry name" value="CYTOCHROME P450 FAMILY 4"/>
    <property type="match status" value="1"/>
</dbReference>
<dbReference type="Pfam" id="PF00067">
    <property type="entry name" value="p450"/>
    <property type="match status" value="1"/>
</dbReference>
<dbReference type="PRINTS" id="PR00463">
    <property type="entry name" value="EP450I"/>
</dbReference>
<dbReference type="PRINTS" id="PR00385">
    <property type="entry name" value="P450"/>
</dbReference>
<dbReference type="SUPFAM" id="SSF48264">
    <property type="entry name" value="Cytochrome P450"/>
    <property type="match status" value="1"/>
</dbReference>
<dbReference type="PROSITE" id="PS00086">
    <property type="entry name" value="CYTOCHROME_P450"/>
    <property type="match status" value="1"/>
</dbReference>
<gene>
    <name type="primary">Cyp4p2</name>
    <name type="ORF">CG1944</name>
</gene>
<organism>
    <name type="scientific">Drosophila melanogaster</name>
    <name type="common">Fruit fly</name>
    <dbReference type="NCBI Taxonomy" id="7227"/>
    <lineage>
        <taxon>Eukaryota</taxon>
        <taxon>Metazoa</taxon>
        <taxon>Ecdysozoa</taxon>
        <taxon>Arthropoda</taxon>
        <taxon>Hexapoda</taxon>
        <taxon>Insecta</taxon>
        <taxon>Pterygota</taxon>
        <taxon>Neoptera</taxon>
        <taxon>Endopterygota</taxon>
        <taxon>Diptera</taxon>
        <taxon>Brachycera</taxon>
        <taxon>Muscomorpha</taxon>
        <taxon>Ephydroidea</taxon>
        <taxon>Drosophilidae</taxon>
        <taxon>Drosophila</taxon>
        <taxon>Sophophora</taxon>
    </lineage>
</organism>